<dbReference type="EMBL" id="CP000886">
    <property type="protein sequence ID" value="ABX69613.1"/>
    <property type="molecule type" value="Genomic_DNA"/>
</dbReference>
<dbReference type="RefSeq" id="WP_001152701.1">
    <property type="nucleotide sequence ID" value="NC_010102.1"/>
</dbReference>
<dbReference type="SMR" id="A9MT13"/>
<dbReference type="KEGG" id="spq:SPAB_04296"/>
<dbReference type="PATRIC" id="fig|1016998.12.peg.4043"/>
<dbReference type="HOGENOM" id="CLU_180796_4_2_6"/>
<dbReference type="BioCyc" id="SENT1016998:SPAB_RS17505-MONOMER"/>
<dbReference type="Proteomes" id="UP000008556">
    <property type="component" value="Chromosome"/>
</dbReference>
<dbReference type="Gene3D" id="1.20.5.300">
    <property type="match status" value="1"/>
</dbReference>
<dbReference type="HAMAP" id="MF_00715">
    <property type="entry name" value="SlyX"/>
    <property type="match status" value="1"/>
</dbReference>
<dbReference type="InterPro" id="IPR007236">
    <property type="entry name" value="SlyX"/>
</dbReference>
<dbReference type="NCBIfam" id="NF002750">
    <property type="entry name" value="PRK02793.1"/>
    <property type="match status" value="1"/>
</dbReference>
<dbReference type="PANTHER" id="PTHR36508">
    <property type="entry name" value="PROTEIN SLYX"/>
    <property type="match status" value="1"/>
</dbReference>
<dbReference type="PANTHER" id="PTHR36508:SF1">
    <property type="entry name" value="PROTEIN SLYX"/>
    <property type="match status" value="1"/>
</dbReference>
<dbReference type="Pfam" id="PF04102">
    <property type="entry name" value="SlyX"/>
    <property type="match status" value="1"/>
</dbReference>
<comment type="similarity">
    <text evidence="1">Belongs to the SlyX family.</text>
</comment>
<reference key="1">
    <citation type="submission" date="2007-11" db="EMBL/GenBank/DDBJ databases">
        <authorList>
            <consortium name="The Salmonella enterica serovar Paratyphi B Genome Sequencing Project"/>
            <person name="McClelland M."/>
            <person name="Sanderson E.K."/>
            <person name="Porwollik S."/>
            <person name="Spieth J."/>
            <person name="Clifton W.S."/>
            <person name="Fulton R."/>
            <person name="Cordes M."/>
            <person name="Wollam A."/>
            <person name="Shah N."/>
            <person name="Pepin K."/>
            <person name="Bhonagiri V."/>
            <person name="Nash W."/>
            <person name="Johnson M."/>
            <person name="Thiruvilangam P."/>
            <person name="Wilson R."/>
        </authorList>
    </citation>
    <scope>NUCLEOTIDE SEQUENCE [LARGE SCALE GENOMIC DNA]</scope>
    <source>
        <strain>ATCC BAA-1250 / SPB7</strain>
    </source>
</reference>
<accession>A9MT13</accession>
<feature type="chain" id="PRO_1000083244" description="Protein SlyX">
    <location>
        <begin position="1"/>
        <end position="72"/>
    </location>
</feature>
<feature type="region of interest" description="Disordered" evidence="2">
    <location>
        <begin position="53"/>
        <end position="72"/>
    </location>
</feature>
<feature type="compositionally biased region" description="Polar residues" evidence="2">
    <location>
        <begin position="55"/>
        <end position="65"/>
    </location>
</feature>
<evidence type="ECO:0000255" key="1">
    <source>
        <dbReference type="HAMAP-Rule" id="MF_00715"/>
    </source>
</evidence>
<evidence type="ECO:0000256" key="2">
    <source>
        <dbReference type="SAM" id="MobiDB-lite"/>
    </source>
</evidence>
<proteinExistence type="inferred from homology"/>
<organism>
    <name type="scientific">Salmonella paratyphi B (strain ATCC BAA-1250 / SPB7)</name>
    <dbReference type="NCBI Taxonomy" id="1016998"/>
    <lineage>
        <taxon>Bacteria</taxon>
        <taxon>Pseudomonadati</taxon>
        <taxon>Pseudomonadota</taxon>
        <taxon>Gammaproteobacteria</taxon>
        <taxon>Enterobacterales</taxon>
        <taxon>Enterobacteriaceae</taxon>
        <taxon>Salmonella</taxon>
    </lineage>
</organism>
<protein>
    <recommendedName>
        <fullName evidence="1">Protein SlyX</fullName>
    </recommendedName>
</protein>
<sequence length="72" mass="8260">MQDITMEARLAELESRLAFQEITIEELNLTVTAHEMEMAKLRDHLRLLTEKLKASQPSNIASQAEETPPPHY</sequence>
<gene>
    <name evidence="1" type="primary">slyX</name>
    <name type="ordered locus">SPAB_04296</name>
</gene>
<name>SLYX_SALPB</name>